<evidence type="ECO:0000250" key="1"/>
<evidence type="ECO:0000269" key="2">
    <source>
    </source>
</evidence>
<evidence type="ECO:0000269" key="3">
    <source>
    </source>
</evidence>
<evidence type="ECO:0000305" key="4"/>
<organism>
    <name type="scientific">Arabidopsis thaliana</name>
    <name type="common">Mouse-ear cress</name>
    <dbReference type="NCBI Taxonomy" id="3702"/>
    <lineage>
        <taxon>Eukaryota</taxon>
        <taxon>Viridiplantae</taxon>
        <taxon>Streptophyta</taxon>
        <taxon>Embryophyta</taxon>
        <taxon>Tracheophyta</taxon>
        <taxon>Spermatophyta</taxon>
        <taxon>Magnoliopsida</taxon>
        <taxon>eudicotyledons</taxon>
        <taxon>Gunneridae</taxon>
        <taxon>Pentapetalae</taxon>
        <taxon>rosids</taxon>
        <taxon>malvids</taxon>
        <taxon>Brassicales</taxon>
        <taxon>Brassicaceae</taxon>
        <taxon>Camelineae</taxon>
        <taxon>Arabidopsis</taxon>
    </lineage>
</organism>
<comment type="function">
    <text evidence="2 3">Possesses low quercetin 3-O-glucosyltransferase, 7-O-glucosyltransferase and 3'-O-glucosyltransferase activities in vitro. Glucosylates other secondary metabolites in vitro like vanillin, trans-resveratrol, curumin and etoposide.</text>
</comment>
<comment type="biophysicochemical properties">
    <kinetics>
        <KM evidence="3">0.33 mM for trans-resveratrol</KM>
        <KM evidence="3">0.59 mM for curcumin</KM>
        <KM evidence="3">1.18 mM for vanillin</KM>
        <KM evidence="3">31 mM for etoposide</KM>
        <Vmax evidence="3">0.14 umol/min/mg enzyme towards vanillin</Vmax>
        <Vmax evidence="3">0.074 umol/min/mg enzyme towards curcumin</Vmax>
        <Vmax evidence="3">0.01 umol/min/mg enzyme towards trans-resveratrol</Vmax>
        <Vmax evidence="3">0.002 umol/min/mg enzyme towards etoposide</Vmax>
    </kinetics>
</comment>
<comment type="similarity">
    <text evidence="4">Belongs to the UDP-glycosyltransferase family.</text>
</comment>
<keyword id="KW-0328">Glycosyltransferase</keyword>
<keyword id="KW-1185">Reference proteome</keyword>
<keyword id="KW-0808">Transferase</keyword>
<gene>
    <name type="primary">UGT71C2</name>
    <name type="ordered locus">At2g29740</name>
    <name type="ORF">T27A16.16</name>
</gene>
<proteinExistence type="evidence at protein level"/>
<accession>O82382</accession>
<dbReference type="EC" id="2.4.1.-"/>
<dbReference type="EMBL" id="AC005496">
    <property type="protein sequence ID" value="AAC35238.1"/>
    <property type="molecule type" value="Genomic_DNA"/>
</dbReference>
<dbReference type="EMBL" id="CP002685">
    <property type="protein sequence ID" value="AEC08299.1"/>
    <property type="molecule type" value="Genomic_DNA"/>
</dbReference>
<dbReference type="EMBL" id="BT004155">
    <property type="protein sequence ID" value="AAO42176.1"/>
    <property type="molecule type" value="mRNA"/>
</dbReference>
<dbReference type="EMBL" id="BT005489">
    <property type="protein sequence ID" value="AAO63909.1"/>
    <property type="molecule type" value="mRNA"/>
</dbReference>
<dbReference type="PIR" id="A84700">
    <property type="entry name" value="A84700"/>
</dbReference>
<dbReference type="RefSeq" id="NP_180535.1">
    <property type="nucleotide sequence ID" value="NM_128528.4"/>
</dbReference>
<dbReference type="SMR" id="O82382"/>
<dbReference type="FunCoup" id="O82382">
    <property type="interactions" value="276"/>
</dbReference>
<dbReference type="STRING" id="3702.O82382"/>
<dbReference type="CAZy" id="GT1">
    <property type="family name" value="Glycosyltransferase Family 1"/>
</dbReference>
<dbReference type="PaxDb" id="3702-AT2G29740.1"/>
<dbReference type="ProteomicsDB" id="228674"/>
<dbReference type="EnsemblPlants" id="AT2G29740.1">
    <property type="protein sequence ID" value="AT2G29740.1"/>
    <property type="gene ID" value="AT2G29740"/>
</dbReference>
<dbReference type="GeneID" id="817524"/>
<dbReference type="Gramene" id="AT2G29740.1">
    <property type="protein sequence ID" value="AT2G29740.1"/>
    <property type="gene ID" value="AT2G29740"/>
</dbReference>
<dbReference type="KEGG" id="ath:AT2G29740"/>
<dbReference type="Araport" id="AT2G29740"/>
<dbReference type="TAIR" id="AT2G29740">
    <property type="gene designation" value="UGT71C2"/>
</dbReference>
<dbReference type="eggNOG" id="KOG1192">
    <property type="taxonomic scope" value="Eukaryota"/>
</dbReference>
<dbReference type="HOGENOM" id="CLU_001724_3_2_1"/>
<dbReference type="InParanoid" id="O82382"/>
<dbReference type="OMA" id="ITILHWS"/>
<dbReference type="PhylomeDB" id="O82382"/>
<dbReference type="SABIO-RK" id="O82382"/>
<dbReference type="PRO" id="PR:O82382"/>
<dbReference type="Proteomes" id="UP000006548">
    <property type="component" value="Chromosome 2"/>
</dbReference>
<dbReference type="ExpressionAtlas" id="O82382">
    <property type="expression patterns" value="baseline and differential"/>
</dbReference>
<dbReference type="GO" id="GO:0080045">
    <property type="term" value="F:quercetin 3'-O-glucosyltransferase activity"/>
    <property type="evidence" value="ECO:0000314"/>
    <property type="project" value="TAIR"/>
</dbReference>
<dbReference type="GO" id="GO:0080043">
    <property type="term" value="F:quercetin 3-O-glucosyltransferase activity"/>
    <property type="evidence" value="ECO:0000314"/>
    <property type="project" value="TAIR"/>
</dbReference>
<dbReference type="GO" id="GO:0080044">
    <property type="term" value="F:quercetin 7-O-glucosyltransferase activity"/>
    <property type="evidence" value="ECO:0000314"/>
    <property type="project" value="TAIR"/>
</dbReference>
<dbReference type="CDD" id="cd03784">
    <property type="entry name" value="GT1_Gtf-like"/>
    <property type="match status" value="1"/>
</dbReference>
<dbReference type="FunFam" id="3.40.50.2000:FF:000056">
    <property type="entry name" value="Glycosyltransferase"/>
    <property type="match status" value="1"/>
</dbReference>
<dbReference type="FunFam" id="3.40.50.2000:FF:000080">
    <property type="entry name" value="Glycosyltransferase"/>
    <property type="match status" value="1"/>
</dbReference>
<dbReference type="Gene3D" id="3.40.50.2000">
    <property type="entry name" value="Glycogen Phosphorylase B"/>
    <property type="match status" value="2"/>
</dbReference>
<dbReference type="InterPro" id="IPR050481">
    <property type="entry name" value="UDP-glycosyltransf_plant"/>
</dbReference>
<dbReference type="InterPro" id="IPR002213">
    <property type="entry name" value="UDP_glucos_trans"/>
</dbReference>
<dbReference type="InterPro" id="IPR035595">
    <property type="entry name" value="UDP_glycos_trans_CS"/>
</dbReference>
<dbReference type="PANTHER" id="PTHR48048">
    <property type="entry name" value="GLYCOSYLTRANSFERASE"/>
    <property type="match status" value="1"/>
</dbReference>
<dbReference type="PANTHER" id="PTHR48048:SF45">
    <property type="entry name" value="GLYCOSYLTRANSFERASE"/>
    <property type="match status" value="1"/>
</dbReference>
<dbReference type="Pfam" id="PF00201">
    <property type="entry name" value="UDPGT"/>
    <property type="match status" value="1"/>
</dbReference>
<dbReference type="SUPFAM" id="SSF53756">
    <property type="entry name" value="UDP-Glycosyltransferase/glycogen phosphorylase"/>
    <property type="match status" value="1"/>
</dbReference>
<dbReference type="PROSITE" id="PS00375">
    <property type="entry name" value="UDPGT"/>
    <property type="match status" value="1"/>
</dbReference>
<protein>
    <recommendedName>
        <fullName>UDP-glycosyltransferase 71C2</fullName>
        <ecNumber>2.4.1.-</ecNumber>
    </recommendedName>
</protein>
<sequence>MAKQQEAELIFIPFPIPGHILATIELAKRLISHQPSRIHTITILHWSLPFLPQSDTIAFLKSLIETESRIRLITLPDVQNPPPMELFVKASESYILEYVKKMVPLVRNALSTLLSSRDESDSVHVAGLVLDFFCVPLIDVGNEFNLPSYIFLTCSASFLGMMKYLLERNRETKPELNRSSDEETISVPGFVNSVPVKVLPPGLFTTESYEAWVEMAERFPEAKGILVNSFESLERNAFDYFDRRPDNYPPVYPIGPILCSNDRPNLDLSERDRILKWLDDQPESSVVFLCFGSLKSLAASQIKEIAQALELVGIRFLWSIRTDPKEYASPNEILPDGFMNRVMGLGLVCGWAPQVEILAHKAIGGFVSHCGWNSILESLRFGVPIATWPMYAEQQLNAFTIVKELGLALEMRLDYVSEYGEIVKADEIAGAVRSLMDGEDVPRRKLKEIAEAGKEAVMDGGSSFVAVKRFIDGL</sequence>
<reference key="1">
    <citation type="journal article" date="1999" name="Nature">
        <title>Sequence and analysis of chromosome 2 of the plant Arabidopsis thaliana.</title>
        <authorList>
            <person name="Lin X."/>
            <person name="Kaul S."/>
            <person name="Rounsley S.D."/>
            <person name="Shea T.P."/>
            <person name="Benito M.-I."/>
            <person name="Town C.D."/>
            <person name="Fujii C.Y."/>
            <person name="Mason T.M."/>
            <person name="Bowman C.L."/>
            <person name="Barnstead M.E."/>
            <person name="Feldblyum T.V."/>
            <person name="Buell C.R."/>
            <person name="Ketchum K.A."/>
            <person name="Lee J.J."/>
            <person name="Ronning C.M."/>
            <person name="Koo H.L."/>
            <person name="Moffat K.S."/>
            <person name="Cronin L.A."/>
            <person name="Shen M."/>
            <person name="Pai G."/>
            <person name="Van Aken S."/>
            <person name="Umayam L."/>
            <person name="Tallon L.J."/>
            <person name="Gill J.E."/>
            <person name="Adams M.D."/>
            <person name="Carrera A.J."/>
            <person name="Creasy T.H."/>
            <person name="Goodman H.M."/>
            <person name="Somerville C.R."/>
            <person name="Copenhaver G.P."/>
            <person name="Preuss D."/>
            <person name="Nierman W.C."/>
            <person name="White O."/>
            <person name="Eisen J.A."/>
            <person name="Salzberg S.L."/>
            <person name="Fraser C.M."/>
            <person name="Venter J.C."/>
        </authorList>
    </citation>
    <scope>NUCLEOTIDE SEQUENCE [LARGE SCALE GENOMIC DNA]</scope>
    <source>
        <strain>cv. Columbia</strain>
    </source>
</reference>
<reference key="2">
    <citation type="journal article" date="2017" name="Plant J.">
        <title>Araport11: a complete reannotation of the Arabidopsis thaliana reference genome.</title>
        <authorList>
            <person name="Cheng C.Y."/>
            <person name="Krishnakumar V."/>
            <person name="Chan A.P."/>
            <person name="Thibaud-Nissen F."/>
            <person name="Schobel S."/>
            <person name="Town C.D."/>
        </authorList>
    </citation>
    <scope>GENOME REANNOTATION</scope>
    <source>
        <strain>cv. Columbia</strain>
    </source>
</reference>
<reference key="3">
    <citation type="journal article" date="2003" name="Science">
        <title>Empirical analysis of transcriptional activity in the Arabidopsis genome.</title>
        <authorList>
            <person name="Yamada K."/>
            <person name="Lim J."/>
            <person name="Dale J.M."/>
            <person name="Chen H."/>
            <person name="Shinn P."/>
            <person name="Palm C.J."/>
            <person name="Southwick A.M."/>
            <person name="Wu H.C."/>
            <person name="Kim C.J."/>
            <person name="Nguyen M."/>
            <person name="Pham P.K."/>
            <person name="Cheuk R.F."/>
            <person name="Karlin-Newmann G."/>
            <person name="Liu S.X."/>
            <person name="Lam B."/>
            <person name="Sakano H."/>
            <person name="Wu T."/>
            <person name="Yu G."/>
            <person name="Miranda M."/>
            <person name="Quach H.L."/>
            <person name="Tripp M."/>
            <person name="Chang C.H."/>
            <person name="Lee J.M."/>
            <person name="Toriumi M.J."/>
            <person name="Chan M.M."/>
            <person name="Tang C.C."/>
            <person name="Onodera C.S."/>
            <person name="Deng J.M."/>
            <person name="Akiyama K."/>
            <person name="Ansari Y."/>
            <person name="Arakawa T."/>
            <person name="Banh J."/>
            <person name="Banno F."/>
            <person name="Bowser L."/>
            <person name="Brooks S.Y."/>
            <person name="Carninci P."/>
            <person name="Chao Q."/>
            <person name="Choy N."/>
            <person name="Enju A."/>
            <person name="Goldsmith A.D."/>
            <person name="Gurjal M."/>
            <person name="Hansen N.F."/>
            <person name="Hayashizaki Y."/>
            <person name="Johnson-Hopson C."/>
            <person name="Hsuan V.W."/>
            <person name="Iida K."/>
            <person name="Karnes M."/>
            <person name="Khan S."/>
            <person name="Koesema E."/>
            <person name="Ishida J."/>
            <person name="Jiang P.X."/>
            <person name="Jones T."/>
            <person name="Kawai J."/>
            <person name="Kamiya A."/>
            <person name="Meyers C."/>
            <person name="Nakajima M."/>
            <person name="Narusaka M."/>
            <person name="Seki M."/>
            <person name="Sakurai T."/>
            <person name="Satou M."/>
            <person name="Tamse R."/>
            <person name="Vaysberg M."/>
            <person name="Wallender E.K."/>
            <person name="Wong C."/>
            <person name="Yamamura Y."/>
            <person name="Yuan S."/>
            <person name="Shinozaki K."/>
            <person name="Davis R.W."/>
            <person name="Theologis A."/>
            <person name="Ecker J.R."/>
        </authorList>
    </citation>
    <scope>NUCLEOTIDE SEQUENCE [LARGE SCALE MRNA]</scope>
    <source>
        <strain>cv. Columbia</strain>
    </source>
</reference>
<reference key="4">
    <citation type="journal article" date="2001" name="J. Biol. Chem.">
        <title>Phylogenetic analysis of the UDP-glycosyltransferase multigene family of Arabidopsis thaliana.</title>
        <authorList>
            <person name="Li Y."/>
            <person name="Baldauf S."/>
            <person name="Lim E.K."/>
            <person name="Bowles D.J."/>
        </authorList>
    </citation>
    <scope>GENE FAMILY</scope>
</reference>
<reference key="5">
    <citation type="journal article" date="2004" name="Biotechnol. Bioeng.">
        <title>Arabidopsis glycosyltransferases as biocatalysts in fermentation for regioselective synthesis of diverse quercetin glucosides.</title>
        <authorList>
            <person name="Lim E.K."/>
            <person name="Ashford D.A."/>
            <person name="Hou B."/>
            <person name="Jackson R.G."/>
            <person name="Bowles D.J."/>
        </authorList>
    </citation>
    <scope>FUNCTION</scope>
</reference>
<reference key="6">
    <citation type="journal article" date="2009" name="Phytochemistry">
        <title>Substrate specificities of family 1 UGTs gained by domain swapping.</title>
        <authorList>
            <person name="Hansen E.H."/>
            <person name="Osmani S.A."/>
            <person name="Kristensen C."/>
            <person name="Moeller B.L."/>
            <person name="Hansen J."/>
        </authorList>
    </citation>
    <scope>FUNCTION</scope>
    <scope>BIOPHYSICOCHEMICAL PROPERTIES</scope>
</reference>
<feature type="chain" id="PRO_0000409054" description="UDP-glycosyltransferase 71C2">
    <location>
        <begin position="1"/>
        <end position="474"/>
    </location>
</feature>
<feature type="binding site" evidence="1">
    <location>
        <position position="293"/>
    </location>
    <ligand>
        <name>UDP-alpha-D-glucose</name>
        <dbReference type="ChEBI" id="CHEBI:58885"/>
    </ligand>
</feature>
<feature type="binding site" evidence="1">
    <location>
        <begin position="352"/>
        <end position="354"/>
    </location>
    <ligand>
        <name>UDP-alpha-D-glucose</name>
        <dbReference type="ChEBI" id="CHEBI:58885"/>
    </ligand>
</feature>
<feature type="binding site" evidence="1">
    <location>
        <begin position="369"/>
        <end position="377"/>
    </location>
    <ligand>
        <name>UDP-alpha-D-glucose</name>
        <dbReference type="ChEBI" id="CHEBI:58885"/>
    </ligand>
</feature>
<feature type="binding site" evidence="1">
    <location>
        <begin position="391"/>
        <end position="394"/>
    </location>
    <ligand>
        <name>UDP-alpha-D-glucose</name>
        <dbReference type="ChEBI" id="CHEBI:58885"/>
    </ligand>
</feature>
<name>U71C2_ARATH</name>